<feature type="chain" id="PRO_1000004658" description="Glutamyl-tRNA reductase">
    <location>
        <begin position="1"/>
        <end position="443"/>
    </location>
</feature>
<feature type="region of interest" description="Disordered" evidence="2">
    <location>
        <begin position="421"/>
        <end position="443"/>
    </location>
</feature>
<feature type="compositionally biased region" description="Basic and acidic residues" evidence="2">
    <location>
        <begin position="430"/>
        <end position="443"/>
    </location>
</feature>
<feature type="active site" description="Nucleophile" evidence="1">
    <location>
        <position position="50"/>
    </location>
</feature>
<feature type="binding site" evidence="1">
    <location>
        <begin position="49"/>
        <end position="52"/>
    </location>
    <ligand>
        <name>substrate</name>
    </ligand>
</feature>
<feature type="binding site" evidence="1">
    <location>
        <position position="109"/>
    </location>
    <ligand>
        <name>substrate</name>
    </ligand>
</feature>
<feature type="binding site" evidence="1">
    <location>
        <begin position="114"/>
        <end position="116"/>
    </location>
    <ligand>
        <name>substrate</name>
    </ligand>
</feature>
<feature type="binding site" evidence="1">
    <location>
        <position position="120"/>
    </location>
    <ligand>
        <name>substrate</name>
    </ligand>
</feature>
<feature type="binding site" evidence="1">
    <location>
        <begin position="189"/>
        <end position="194"/>
    </location>
    <ligand>
        <name>NADP(+)</name>
        <dbReference type="ChEBI" id="CHEBI:58349"/>
    </ligand>
</feature>
<feature type="site" description="Important for activity" evidence="1">
    <location>
        <position position="99"/>
    </location>
</feature>
<accession>Q3A008</accession>
<comment type="function">
    <text evidence="1">Catalyzes the NADPH-dependent reduction of glutamyl-tRNA(Glu) to glutamate 1-semialdehyde (GSA).</text>
</comment>
<comment type="catalytic activity">
    <reaction evidence="1">
        <text>(S)-4-amino-5-oxopentanoate + tRNA(Glu) + NADP(+) = L-glutamyl-tRNA(Glu) + NADPH + H(+)</text>
        <dbReference type="Rhea" id="RHEA:12344"/>
        <dbReference type="Rhea" id="RHEA-COMP:9663"/>
        <dbReference type="Rhea" id="RHEA-COMP:9680"/>
        <dbReference type="ChEBI" id="CHEBI:15378"/>
        <dbReference type="ChEBI" id="CHEBI:57501"/>
        <dbReference type="ChEBI" id="CHEBI:57783"/>
        <dbReference type="ChEBI" id="CHEBI:58349"/>
        <dbReference type="ChEBI" id="CHEBI:78442"/>
        <dbReference type="ChEBI" id="CHEBI:78520"/>
        <dbReference type="EC" id="1.2.1.70"/>
    </reaction>
</comment>
<comment type="pathway">
    <text evidence="1">Porphyrin-containing compound metabolism; protoporphyrin-IX biosynthesis; 5-aminolevulinate from L-glutamyl-tRNA(Glu): step 1/2.</text>
</comment>
<comment type="subunit">
    <text evidence="1">Homodimer.</text>
</comment>
<comment type="domain">
    <text evidence="1">Possesses an unusual extended V-shaped dimeric structure with each monomer consisting of three distinct domains arranged along a curved 'spinal' alpha-helix. The N-terminal catalytic domain specifically recognizes the glutamate moiety of the substrate. The second domain is the NADPH-binding domain, and the third C-terminal domain is responsible for dimerization.</text>
</comment>
<comment type="miscellaneous">
    <text evidence="1">During catalysis, the active site Cys acts as a nucleophile attacking the alpha-carbonyl group of tRNA-bound glutamate with the formation of a thioester intermediate between enzyme and glutamate, and the concomitant release of tRNA(Glu). The thioester intermediate is finally reduced by direct hydride transfer from NADPH, to form the product GSA.</text>
</comment>
<comment type="similarity">
    <text evidence="1">Belongs to the glutamyl-tRNA reductase family.</text>
</comment>
<gene>
    <name evidence="1" type="primary">hemA</name>
    <name type="ordered locus">Pcar_3064</name>
</gene>
<keyword id="KW-0521">NADP</keyword>
<keyword id="KW-0560">Oxidoreductase</keyword>
<keyword id="KW-0627">Porphyrin biosynthesis</keyword>
<keyword id="KW-1185">Reference proteome</keyword>
<evidence type="ECO:0000255" key="1">
    <source>
        <dbReference type="HAMAP-Rule" id="MF_00087"/>
    </source>
</evidence>
<evidence type="ECO:0000256" key="2">
    <source>
        <dbReference type="SAM" id="MobiDB-lite"/>
    </source>
</evidence>
<reference key="1">
    <citation type="submission" date="2005-10" db="EMBL/GenBank/DDBJ databases">
        <title>Complete sequence of Pelobacter carbinolicus DSM 2380.</title>
        <authorList>
            <person name="Copeland A."/>
            <person name="Lucas S."/>
            <person name="Lapidus A."/>
            <person name="Barry K."/>
            <person name="Detter J.C."/>
            <person name="Glavina T."/>
            <person name="Hammon N."/>
            <person name="Israni S."/>
            <person name="Pitluck S."/>
            <person name="Chertkov O."/>
            <person name="Schmutz J."/>
            <person name="Larimer F."/>
            <person name="Land M."/>
            <person name="Kyrpides N."/>
            <person name="Ivanova N."/>
            <person name="Richardson P."/>
        </authorList>
    </citation>
    <scope>NUCLEOTIDE SEQUENCE [LARGE SCALE GENOMIC DNA]</scope>
    <source>
        <strain>DSM 2380 / NBRC 103641 / GraBd1</strain>
    </source>
</reference>
<protein>
    <recommendedName>
        <fullName evidence="1">Glutamyl-tRNA reductase</fullName>
        <shortName evidence="1">GluTR</shortName>
        <ecNumber evidence="1">1.2.1.70</ecNumber>
    </recommendedName>
</protein>
<organism>
    <name type="scientific">Syntrophotalea carbinolica (strain DSM 2380 / NBRC 103641 / GraBd1)</name>
    <name type="common">Pelobacter carbinolicus</name>
    <dbReference type="NCBI Taxonomy" id="338963"/>
    <lineage>
        <taxon>Bacteria</taxon>
        <taxon>Pseudomonadati</taxon>
        <taxon>Thermodesulfobacteriota</taxon>
        <taxon>Desulfuromonadia</taxon>
        <taxon>Desulfuromonadales</taxon>
        <taxon>Syntrophotaleaceae</taxon>
        <taxon>Syntrophotalea</taxon>
    </lineage>
</organism>
<sequence>MNFLVIGLSHKTAPVELRERISFSSDDPGGVLRAITALPGISEGMILSTCNRVEVYAASGDPAGGCACLQRFMAEHHGLDEAQLKPHLYIHSGRDAIRHLFRVASSLDSMILGEPQILGQLKEAYNLAESSCTAGPVLNRLLPRAFAAAKRVRNETAIAQHAVSVSYAAVELARKIFGDLAGKSVMIVGAGKMCELAARHLTGQNIGEVLVTNRTLARAQSLAEQFGGRAIPFAEFPLYLNQADIVLTSTAAGGLLLTRAQLEQIIRQRKNRPMFLIDIAVPRNIDPEVNHIDNVYLYDIDDLNGVIETNLRERRKAAKKAEDIIEQEIVRFYSWLRSLEATPMIVALRRQVEDIRRTETEKTLGSLQHLDAGDRRAVEALTRAIVNKVLHSPLSVLKRAGDDITGEIYLEAVRRLFDLNPDSQQTGGDSVEKDADSKQDLTS</sequence>
<name>HEM1_SYNC1</name>
<proteinExistence type="inferred from homology"/>
<dbReference type="EC" id="1.2.1.70" evidence="1"/>
<dbReference type="EMBL" id="CP000142">
    <property type="protein sequence ID" value="ABA90299.1"/>
    <property type="molecule type" value="Genomic_DNA"/>
</dbReference>
<dbReference type="RefSeq" id="WP_011342859.1">
    <property type="nucleotide sequence ID" value="NC_007498.2"/>
</dbReference>
<dbReference type="SMR" id="Q3A008"/>
<dbReference type="STRING" id="338963.Pcar_3064"/>
<dbReference type="KEGG" id="pca:Pcar_3064"/>
<dbReference type="eggNOG" id="COG0373">
    <property type="taxonomic scope" value="Bacteria"/>
</dbReference>
<dbReference type="HOGENOM" id="CLU_035113_2_2_7"/>
<dbReference type="OrthoDB" id="110209at2"/>
<dbReference type="UniPathway" id="UPA00251">
    <property type="reaction ID" value="UER00316"/>
</dbReference>
<dbReference type="Proteomes" id="UP000002534">
    <property type="component" value="Chromosome"/>
</dbReference>
<dbReference type="GO" id="GO:0008883">
    <property type="term" value="F:glutamyl-tRNA reductase activity"/>
    <property type="evidence" value="ECO:0007669"/>
    <property type="project" value="UniProtKB-UniRule"/>
</dbReference>
<dbReference type="GO" id="GO:0050661">
    <property type="term" value="F:NADP binding"/>
    <property type="evidence" value="ECO:0007669"/>
    <property type="project" value="InterPro"/>
</dbReference>
<dbReference type="GO" id="GO:0019353">
    <property type="term" value="P:protoporphyrinogen IX biosynthetic process from glutamate"/>
    <property type="evidence" value="ECO:0007669"/>
    <property type="project" value="TreeGrafter"/>
</dbReference>
<dbReference type="CDD" id="cd05213">
    <property type="entry name" value="NAD_bind_Glutamyl_tRNA_reduct"/>
    <property type="match status" value="1"/>
</dbReference>
<dbReference type="FunFam" id="3.30.460.30:FF:000001">
    <property type="entry name" value="Glutamyl-tRNA reductase"/>
    <property type="match status" value="1"/>
</dbReference>
<dbReference type="FunFam" id="3.40.50.720:FF:000031">
    <property type="entry name" value="Glutamyl-tRNA reductase"/>
    <property type="match status" value="1"/>
</dbReference>
<dbReference type="Gene3D" id="3.30.460.30">
    <property type="entry name" value="Glutamyl-tRNA reductase, N-terminal domain"/>
    <property type="match status" value="1"/>
</dbReference>
<dbReference type="Gene3D" id="3.40.50.720">
    <property type="entry name" value="NAD(P)-binding Rossmann-like Domain"/>
    <property type="match status" value="1"/>
</dbReference>
<dbReference type="HAMAP" id="MF_00087">
    <property type="entry name" value="Glu_tRNA_reductase"/>
    <property type="match status" value="1"/>
</dbReference>
<dbReference type="InterPro" id="IPR000343">
    <property type="entry name" value="4pyrrol_synth_GluRdtase"/>
</dbReference>
<dbReference type="InterPro" id="IPR015896">
    <property type="entry name" value="4pyrrol_synth_GluRdtase_dimer"/>
</dbReference>
<dbReference type="InterPro" id="IPR015895">
    <property type="entry name" value="4pyrrol_synth_GluRdtase_N"/>
</dbReference>
<dbReference type="InterPro" id="IPR018214">
    <property type="entry name" value="GluRdtase_CS"/>
</dbReference>
<dbReference type="InterPro" id="IPR036453">
    <property type="entry name" value="GluRdtase_dimer_dom_sf"/>
</dbReference>
<dbReference type="InterPro" id="IPR036343">
    <property type="entry name" value="GluRdtase_N_sf"/>
</dbReference>
<dbReference type="InterPro" id="IPR036291">
    <property type="entry name" value="NAD(P)-bd_dom_sf"/>
</dbReference>
<dbReference type="InterPro" id="IPR006151">
    <property type="entry name" value="Shikm_DH/Glu-tRNA_Rdtase"/>
</dbReference>
<dbReference type="NCBIfam" id="TIGR01035">
    <property type="entry name" value="hemA"/>
    <property type="match status" value="1"/>
</dbReference>
<dbReference type="NCBIfam" id="NF000744">
    <property type="entry name" value="PRK00045.1-3"/>
    <property type="match status" value="1"/>
</dbReference>
<dbReference type="PANTHER" id="PTHR43013">
    <property type="entry name" value="GLUTAMYL-TRNA REDUCTASE"/>
    <property type="match status" value="1"/>
</dbReference>
<dbReference type="PANTHER" id="PTHR43013:SF1">
    <property type="entry name" value="GLUTAMYL-TRNA REDUCTASE"/>
    <property type="match status" value="1"/>
</dbReference>
<dbReference type="Pfam" id="PF00745">
    <property type="entry name" value="GlutR_dimer"/>
    <property type="match status" value="1"/>
</dbReference>
<dbReference type="Pfam" id="PF05201">
    <property type="entry name" value="GlutR_N"/>
    <property type="match status" value="1"/>
</dbReference>
<dbReference type="Pfam" id="PF01488">
    <property type="entry name" value="Shikimate_DH"/>
    <property type="match status" value="1"/>
</dbReference>
<dbReference type="PIRSF" id="PIRSF000445">
    <property type="entry name" value="4pyrrol_synth_GluRdtase"/>
    <property type="match status" value="1"/>
</dbReference>
<dbReference type="SUPFAM" id="SSF69742">
    <property type="entry name" value="Glutamyl tRNA-reductase catalytic, N-terminal domain"/>
    <property type="match status" value="1"/>
</dbReference>
<dbReference type="SUPFAM" id="SSF69075">
    <property type="entry name" value="Glutamyl tRNA-reductase dimerization domain"/>
    <property type="match status" value="1"/>
</dbReference>
<dbReference type="SUPFAM" id="SSF51735">
    <property type="entry name" value="NAD(P)-binding Rossmann-fold domains"/>
    <property type="match status" value="1"/>
</dbReference>
<dbReference type="PROSITE" id="PS00747">
    <property type="entry name" value="GLUTR"/>
    <property type="match status" value="1"/>
</dbReference>